<feature type="transit peptide" description="Mitochondrion" evidence="1">
    <location>
        <begin position="1"/>
        <end position="64"/>
    </location>
</feature>
<feature type="chain" id="PRO_0000342868" description="Putative pentatricopeptide repeat-containing protein At1g77010, mitochondrial">
    <location>
        <begin position="65"/>
        <end position="695"/>
    </location>
</feature>
<feature type="repeat" description="PPR 1">
    <location>
        <begin position="61"/>
        <end position="91"/>
    </location>
</feature>
<feature type="repeat" description="PPR 2">
    <location>
        <begin position="92"/>
        <end position="122"/>
    </location>
</feature>
<feature type="repeat" description="PPR 3">
    <location>
        <begin position="123"/>
        <end position="157"/>
    </location>
</feature>
<feature type="repeat" description="PPR 4">
    <location>
        <begin position="159"/>
        <end position="184"/>
    </location>
</feature>
<feature type="repeat" description="PPR 5">
    <location>
        <begin position="186"/>
        <end position="220"/>
    </location>
</feature>
<feature type="repeat" description="PPR 6">
    <location>
        <begin position="221"/>
        <end position="251"/>
    </location>
</feature>
<feature type="repeat" description="PPR 7">
    <location>
        <begin position="252"/>
        <end position="282"/>
    </location>
</feature>
<feature type="repeat" description="PPR 8">
    <location>
        <begin position="283"/>
        <end position="313"/>
    </location>
</feature>
<feature type="repeat" description="PPR 9">
    <location>
        <begin position="317"/>
        <end position="351"/>
    </location>
</feature>
<feature type="repeat" description="PPR 10">
    <location>
        <begin position="352"/>
        <end position="382"/>
    </location>
</feature>
<feature type="repeat" description="PPR 11">
    <location>
        <begin position="383"/>
        <end position="417"/>
    </location>
</feature>
<feature type="repeat" description="PPR 12">
    <location>
        <begin position="418"/>
        <end position="448"/>
    </location>
</feature>
<feature type="repeat" description="PPR 13">
    <location>
        <begin position="449"/>
        <end position="483"/>
    </location>
</feature>
<feature type="repeat" description="PPR 14">
    <location>
        <begin position="484"/>
        <end position="514"/>
    </location>
</feature>
<feature type="repeat" description="PPR 15">
    <location>
        <begin position="515"/>
        <end position="549"/>
    </location>
</feature>
<feature type="repeat" description="PPR 16">
    <location>
        <begin position="550"/>
        <end position="585"/>
    </location>
</feature>
<feature type="repeat" description="PPR 17">
    <location>
        <begin position="586"/>
        <end position="616"/>
    </location>
</feature>
<feature type="region of interest" description="Type E motif; degenerate">
    <location>
        <begin position="621"/>
        <end position="695"/>
    </location>
</feature>
<keyword id="KW-0496">Mitochondrion</keyword>
<keyword id="KW-1185">Reference proteome</keyword>
<keyword id="KW-0677">Repeat</keyword>
<keyword id="KW-0809">Transit peptide</keyword>
<evidence type="ECO:0000255" key="1"/>
<evidence type="ECO:0000305" key="2"/>
<organism>
    <name type="scientific">Arabidopsis thaliana</name>
    <name type="common">Mouse-ear cress</name>
    <dbReference type="NCBI Taxonomy" id="3702"/>
    <lineage>
        <taxon>Eukaryota</taxon>
        <taxon>Viridiplantae</taxon>
        <taxon>Streptophyta</taxon>
        <taxon>Embryophyta</taxon>
        <taxon>Tracheophyta</taxon>
        <taxon>Spermatophyta</taxon>
        <taxon>Magnoliopsida</taxon>
        <taxon>eudicotyledons</taxon>
        <taxon>Gunneridae</taxon>
        <taxon>Pentapetalae</taxon>
        <taxon>rosids</taxon>
        <taxon>malvids</taxon>
        <taxon>Brassicales</taxon>
        <taxon>Brassicaceae</taxon>
        <taxon>Camelineae</taxon>
        <taxon>Arabidopsis</taxon>
    </lineage>
</organism>
<name>PP127_ARATH</name>
<sequence length="695" mass="77874">MILKYNSSYRFYLSSSFLQAMEVDCRRYYVRLLQSCSSRNRETLWRQTNGLLLKKGFLSSIVIVANHLLQMYSRSGKMGIARNLFDEMPDRNYFSWNTMIEGYMNSGEKGTSLRFFDMMPERDGYSWNVVVSGFAKAGELSVARRLFNAMPEKDVVTLNSLLHGYILNGYAEEALRLFKELNFSADAITLTTVLKACAELEALKCGKQIHAQILIGGVECDSKMNSSLVNVYAKCGDLRMASYMLEQIREPDDHSLSALISGYANCGRVNESRGLFDRKSNRCVILWNSMISGYIANNMKMEALVLFNEMRNETREDSRTLAAVINACIGLGFLETGKQMHCHACKFGLIDDIVVASTLLDMYSKCGSPMEACKLFSEVESYDTILLNSMIKVYFSCGRIDDAKRVFERIENKSLISWNSMTNGFSQNGCTVETLEYFHQMHKLDLPTDEVSLSSVISACASISSLELGEQVFARATIVGLDSDQVVSSSLIDLYCKCGFVEHGRRVFDTMVKSDEVPWNSMISGYATNGQGFEAIDLFKKMSVAGIRPTQITFMVVLTACNYCGLVEEGRKLFESMKVDHGFVPDKEHFSCMVDLLARAGYVEEAINLVEEMPFDVDGSMWSSILRGCVANGYKAMGKKAAEKIIELEPENSVAYVQLSAIFATSGDWESSALVRKLMRENNVTKNPGSSWTDC</sequence>
<gene>
    <name type="primary">PCMP-E5</name>
    <name type="ordered locus">At1g77010</name>
    <name type="ORF">F22K20.11</name>
</gene>
<accession>O49287</accession>
<reference key="1">
    <citation type="journal article" date="2000" name="Nature">
        <title>Sequence and analysis of chromosome 1 of the plant Arabidopsis thaliana.</title>
        <authorList>
            <person name="Theologis A."/>
            <person name="Ecker J.R."/>
            <person name="Palm C.J."/>
            <person name="Federspiel N.A."/>
            <person name="Kaul S."/>
            <person name="White O."/>
            <person name="Alonso J."/>
            <person name="Altafi H."/>
            <person name="Araujo R."/>
            <person name="Bowman C.L."/>
            <person name="Brooks S.Y."/>
            <person name="Buehler E."/>
            <person name="Chan A."/>
            <person name="Chao Q."/>
            <person name="Chen H."/>
            <person name="Cheuk R.F."/>
            <person name="Chin C.W."/>
            <person name="Chung M.K."/>
            <person name="Conn L."/>
            <person name="Conway A.B."/>
            <person name="Conway A.R."/>
            <person name="Creasy T.H."/>
            <person name="Dewar K."/>
            <person name="Dunn P."/>
            <person name="Etgu P."/>
            <person name="Feldblyum T.V."/>
            <person name="Feng J.-D."/>
            <person name="Fong B."/>
            <person name="Fujii C.Y."/>
            <person name="Gill J.E."/>
            <person name="Goldsmith A.D."/>
            <person name="Haas B."/>
            <person name="Hansen N.F."/>
            <person name="Hughes B."/>
            <person name="Huizar L."/>
            <person name="Hunter J.L."/>
            <person name="Jenkins J."/>
            <person name="Johnson-Hopson C."/>
            <person name="Khan S."/>
            <person name="Khaykin E."/>
            <person name="Kim C.J."/>
            <person name="Koo H.L."/>
            <person name="Kremenetskaia I."/>
            <person name="Kurtz D.B."/>
            <person name="Kwan A."/>
            <person name="Lam B."/>
            <person name="Langin-Hooper S."/>
            <person name="Lee A."/>
            <person name="Lee J.M."/>
            <person name="Lenz C.A."/>
            <person name="Li J.H."/>
            <person name="Li Y.-P."/>
            <person name="Lin X."/>
            <person name="Liu S.X."/>
            <person name="Liu Z.A."/>
            <person name="Luros J.S."/>
            <person name="Maiti R."/>
            <person name="Marziali A."/>
            <person name="Militscher J."/>
            <person name="Miranda M."/>
            <person name="Nguyen M."/>
            <person name="Nierman W.C."/>
            <person name="Osborne B.I."/>
            <person name="Pai G."/>
            <person name="Peterson J."/>
            <person name="Pham P.K."/>
            <person name="Rizzo M."/>
            <person name="Rooney T."/>
            <person name="Rowley D."/>
            <person name="Sakano H."/>
            <person name="Salzberg S.L."/>
            <person name="Schwartz J.R."/>
            <person name="Shinn P."/>
            <person name="Southwick A.M."/>
            <person name="Sun H."/>
            <person name="Tallon L.J."/>
            <person name="Tambunga G."/>
            <person name="Toriumi M.J."/>
            <person name="Town C.D."/>
            <person name="Utterback T."/>
            <person name="Van Aken S."/>
            <person name="Vaysberg M."/>
            <person name="Vysotskaia V.S."/>
            <person name="Walker M."/>
            <person name="Wu D."/>
            <person name="Yu G."/>
            <person name="Fraser C.M."/>
            <person name="Venter J.C."/>
            <person name="Davis R.W."/>
        </authorList>
    </citation>
    <scope>NUCLEOTIDE SEQUENCE [LARGE SCALE GENOMIC DNA]</scope>
    <source>
        <strain>cv. Columbia</strain>
    </source>
</reference>
<reference key="2">
    <citation type="journal article" date="2017" name="Plant J.">
        <title>Araport11: a complete reannotation of the Arabidopsis thaliana reference genome.</title>
        <authorList>
            <person name="Cheng C.Y."/>
            <person name="Krishnakumar V."/>
            <person name="Chan A.P."/>
            <person name="Thibaud-Nissen F."/>
            <person name="Schobel S."/>
            <person name="Town C.D."/>
        </authorList>
    </citation>
    <scope>GENOME REANNOTATION</scope>
    <source>
        <strain>cv. Columbia</strain>
    </source>
</reference>
<reference key="3">
    <citation type="journal article" date="2000" name="Plant Mol. Biol.">
        <title>In Arabidopsis thaliana, 1% of the genome codes for a novel protein family unique to plants.</title>
        <authorList>
            <person name="Aubourg S."/>
            <person name="Boudet N."/>
            <person name="Kreis M."/>
            <person name="Lecharny A."/>
        </authorList>
    </citation>
    <scope>GENE FAMILY</scope>
</reference>
<reference key="4">
    <citation type="journal article" date="2004" name="Plant Cell">
        <title>Genome-wide analysis of Arabidopsis pentatricopeptide repeat proteins reveals their essential role in organelle biogenesis.</title>
        <authorList>
            <person name="Lurin C."/>
            <person name="Andres C."/>
            <person name="Aubourg S."/>
            <person name="Bellaoui M."/>
            <person name="Bitton F."/>
            <person name="Bruyere C."/>
            <person name="Caboche M."/>
            <person name="Debast C."/>
            <person name="Gualberto J."/>
            <person name="Hoffmann B."/>
            <person name="Lecharny A."/>
            <person name="Le Ret M."/>
            <person name="Martin-Magniette M.-L."/>
            <person name="Mireau H."/>
            <person name="Peeters N."/>
            <person name="Renou J.-P."/>
            <person name="Szurek B."/>
            <person name="Taconnat L."/>
            <person name="Small I."/>
        </authorList>
    </citation>
    <scope>GENE FAMILY</scope>
</reference>
<comment type="subcellular location">
    <subcellularLocation>
        <location evidence="2">Mitochondrion</location>
    </subcellularLocation>
</comment>
<comment type="similarity">
    <text evidence="2">Belongs to the PPR family. PCMP-E subfamily.</text>
</comment>
<comment type="online information" name="Pentatricopeptide repeat proteins">
    <link uri="https://ppr.plantenergy.uwa.edu.au"/>
</comment>
<dbReference type="EMBL" id="AC002291">
    <property type="protein sequence ID" value="AAC00623.1"/>
    <property type="molecule type" value="Genomic_DNA"/>
</dbReference>
<dbReference type="EMBL" id="CP002684">
    <property type="protein sequence ID" value="AEE35925.1"/>
    <property type="molecule type" value="Genomic_DNA"/>
</dbReference>
<dbReference type="PIR" id="B96799">
    <property type="entry name" value="B96799"/>
</dbReference>
<dbReference type="RefSeq" id="NP_177827.1">
    <property type="nucleotide sequence ID" value="NM_106352.2"/>
</dbReference>
<dbReference type="SMR" id="O49287"/>
<dbReference type="FunCoup" id="O49287">
    <property type="interactions" value="146"/>
</dbReference>
<dbReference type="STRING" id="3702.O49287"/>
<dbReference type="iPTMnet" id="O49287"/>
<dbReference type="PaxDb" id="3702-AT1G77010.1"/>
<dbReference type="ProteomicsDB" id="249406"/>
<dbReference type="EnsemblPlants" id="AT1G77010.1">
    <property type="protein sequence ID" value="AT1G77010.1"/>
    <property type="gene ID" value="AT1G77010"/>
</dbReference>
<dbReference type="GeneID" id="844037"/>
<dbReference type="Gramene" id="AT1G77010.1">
    <property type="protein sequence ID" value="AT1G77010.1"/>
    <property type="gene ID" value="AT1G77010"/>
</dbReference>
<dbReference type="KEGG" id="ath:AT1G77010"/>
<dbReference type="Araport" id="AT1G77010"/>
<dbReference type="TAIR" id="AT1G77010"/>
<dbReference type="eggNOG" id="KOG4197">
    <property type="taxonomic scope" value="Eukaryota"/>
</dbReference>
<dbReference type="HOGENOM" id="CLU_002706_0_6_1"/>
<dbReference type="InParanoid" id="O49287"/>
<dbReference type="OMA" id="IGGCKAQ"/>
<dbReference type="PhylomeDB" id="O49287"/>
<dbReference type="PRO" id="PR:O49287"/>
<dbReference type="Proteomes" id="UP000006548">
    <property type="component" value="Chromosome 1"/>
</dbReference>
<dbReference type="ExpressionAtlas" id="O49287">
    <property type="expression patterns" value="baseline and differential"/>
</dbReference>
<dbReference type="GO" id="GO:0005739">
    <property type="term" value="C:mitochondrion"/>
    <property type="evidence" value="ECO:0007669"/>
    <property type="project" value="UniProtKB-SubCell"/>
</dbReference>
<dbReference type="GO" id="GO:0003723">
    <property type="term" value="F:RNA binding"/>
    <property type="evidence" value="ECO:0007669"/>
    <property type="project" value="InterPro"/>
</dbReference>
<dbReference type="GO" id="GO:0009451">
    <property type="term" value="P:RNA modification"/>
    <property type="evidence" value="ECO:0007669"/>
    <property type="project" value="InterPro"/>
</dbReference>
<dbReference type="FunFam" id="1.25.40.10:FF:000679">
    <property type="entry name" value="Pentatricopeptide repeat-containing protein At5g03800"/>
    <property type="match status" value="1"/>
</dbReference>
<dbReference type="FunFam" id="1.25.40.10:FF:000797">
    <property type="entry name" value="Pentatricopeptide repeat-containing protein chloroplastic"/>
    <property type="match status" value="1"/>
</dbReference>
<dbReference type="FunFam" id="1.25.40.10:FF:001573">
    <property type="entry name" value="Pentatricopeptide repeat-containing protein mitochondrial"/>
    <property type="match status" value="1"/>
</dbReference>
<dbReference type="FunFam" id="1.25.40.10:FF:000205">
    <property type="entry name" value="Pentatricopeptide repeat-containing protein, mitochondrial"/>
    <property type="match status" value="1"/>
</dbReference>
<dbReference type="Gene3D" id="1.25.40.10">
    <property type="entry name" value="Tetratricopeptide repeat domain"/>
    <property type="match status" value="6"/>
</dbReference>
<dbReference type="InterPro" id="IPR046848">
    <property type="entry name" value="E_motif"/>
</dbReference>
<dbReference type="InterPro" id="IPR002885">
    <property type="entry name" value="Pentatricopeptide_rpt"/>
</dbReference>
<dbReference type="InterPro" id="IPR046960">
    <property type="entry name" value="PPR_At4g14850-like_plant"/>
</dbReference>
<dbReference type="InterPro" id="IPR011990">
    <property type="entry name" value="TPR-like_helical_dom_sf"/>
</dbReference>
<dbReference type="NCBIfam" id="TIGR00756">
    <property type="entry name" value="PPR"/>
    <property type="match status" value="6"/>
</dbReference>
<dbReference type="PANTHER" id="PTHR47926:SF359">
    <property type="entry name" value="PENTACOTRIPEPTIDE-REPEAT REGION OF PRORP DOMAIN-CONTAINING PROTEIN"/>
    <property type="match status" value="1"/>
</dbReference>
<dbReference type="PANTHER" id="PTHR47926">
    <property type="entry name" value="PENTATRICOPEPTIDE REPEAT-CONTAINING PROTEIN"/>
    <property type="match status" value="1"/>
</dbReference>
<dbReference type="Pfam" id="PF20431">
    <property type="entry name" value="E_motif"/>
    <property type="match status" value="1"/>
</dbReference>
<dbReference type="Pfam" id="PF01535">
    <property type="entry name" value="PPR"/>
    <property type="match status" value="11"/>
</dbReference>
<dbReference type="Pfam" id="PF12854">
    <property type="entry name" value="PPR_1"/>
    <property type="match status" value="1"/>
</dbReference>
<dbReference type="Pfam" id="PF13041">
    <property type="entry name" value="PPR_2"/>
    <property type="match status" value="1"/>
</dbReference>
<dbReference type="PROSITE" id="PS51375">
    <property type="entry name" value="PPR"/>
    <property type="match status" value="19"/>
</dbReference>
<proteinExistence type="inferred from homology"/>
<protein>
    <recommendedName>
        <fullName>Putative pentatricopeptide repeat-containing protein At1g77010, mitochondrial</fullName>
    </recommendedName>
</protein>